<gene>
    <name evidence="1" type="primary">grpE</name>
    <name type="ordered locus">PAM_705</name>
</gene>
<feature type="chain" id="PRO_0000113829" description="Protein GrpE">
    <location>
        <begin position="1"/>
        <end position="247"/>
    </location>
</feature>
<feature type="region of interest" description="Disordered" evidence="2">
    <location>
        <begin position="31"/>
        <end position="79"/>
    </location>
</feature>
<feature type="compositionally biased region" description="Basic and acidic residues" evidence="2">
    <location>
        <begin position="31"/>
        <end position="49"/>
    </location>
</feature>
<feature type="compositionally biased region" description="Low complexity" evidence="2">
    <location>
        <begin position="50"/>
        <end position="68"/>
    </location>
</feature>
<evidence type="ECO:0000255" key="1">
    <source>
        <dbReference type="HAMAP-Rule" id="MF_01151"/>
    </source>
</evidence>
<evidence type="ECO:0000256" key="2">
    <source>
        <dbReference type="SAM" id="MobiDB-lite"/>
    </source>
</evidence>
<protein>
    <recommendedName>
        <fullName evidence="1">Protein GrpE</fullName>
    </recommendedName>
    <alternativeName>
        <fullName evidence="1">HSP-70 cofactor</fullName>
    </alternativeName>
</protein>
<sequence>MFLEKDQDNLDNLETQAKELHKDCKECKNCQKEETKTTNKDNQKEDETVKNQSNQSNQSNQTKQTNTKQQKHQPKENSHLQITKLQTQIKELQQQLTQQKKSFDEELLKNQAELINFKKRAQTQKANELKYASSNFITNLLMPLEQLEKVIDMPTQNELLQKYLLGFKLLQQQIKKVLQDEGVEEIEALNKPFDPALHHALETVCDPKKPDKTNLAVLQKGYLYKKRILRPTLVKVNEWSDKNDKNE</sequence>
<keyword id="KW-0143">Chaperone</keyword>
<keyword id="KW-0963">Cytoplasm</keyword>
<keyword id="KW-0346">Stress response</keyword>
<name>GRPE_ONYPE</name>
<proteinExistence type="inferred from homology"/>
<reference key="1">
    <citation type="journal article" date="2004" name="Nat. Genet.">
        <title>Reductive evolution suggested from the complete genome sequence of a plant-pathogenic phytoplasma.</title>
        <authorList>
            <person name="Oshima K."/>
            <person name="Kakizawa S."/>
            <person name="Nishigawa H."/>
            <person name="Jung H.-Y."/>
            <person name="Wei W."/>
            <person name="Suzuki S."/>
            <person name="Arashida R."/>
            <person name="Nakata D."/>
            <person name="Miyata S."/>
            <person name="Ugaki M."/>
            <person name="Namba S."/>
        </authorList>
    </citation>
    <scope>NUCLEOTIDE SEQUENCE [LARGE SCALE GENOMIC DNA]</scope>
    <source>
        <strain>OY-M</strain>
    </source>
</reference>
<accession>Q6YPM0</accession>
<dbReference type="EMBL" id="AP006628">
    <property type="protein sequence ID" value="BAD04790.1"/>
    <property type="molecule type" value="Genomic_DNA"/>
</dbReference>
<dbReference type="SMR" id="Q6YPM0"/>
<dbReference type="STRING" id="262768.PAM_705"/>
<dbReference type="KEGG" id="poy:PAM_705"/>
<dbReference type="eggNOG" id="COG0576">
    <property type="taxonomic scope" value="Bacteria"/>
</dbReference>
<dbReference type="HOGENOM" id="CLU_057217_5_2_14"/>
<dbReference type="BioCyc" id="OYEL262768:G1G26-858-MONOMER"/>
<dbReference type="Proteomes" id="UP000002523">
    <property type="component" value="Chromosome"/>
</dbReference>
<dbReference type="GO" id="GO:0005737">
    <property type="term" value="C:cytoplasm"/>
    <property type="evidence" value="ECO:0007669"/>
    <property type="project" value="UniProtKB-SubCell"/>
</dbReference>
<dbReference type="GO" id="GO:0000774">
    <property type="term" value="F:adenyl-nucleotide exchange factor activity"/>
    <property type="evidence" value="ECO:0007669"/>
    <property type="project" value="InterPro"/>
</dbReference>
<dbReference type="GO" id="GO:0042803">
    <property type="term" value="F:protein homodimerization activity"/>
    <property type="evidence" value="ECO:0007669"/>
    <property type="project" value="InterPro"/>
</dbReference>
<dbReference type="GO" id="GO:0051087">
    <property type="term" value="F:protein-folding chaperone binding"/>
    <property type="evidence" value="ECO:0007669"/>
    <property type="project" value="InterPro"/>
</dbReference>
<dbReference type="GO" id="GO:0051082">
    <property type="term" value="F:unfolded protein binding"/>
    <property type="evidence" value="ECO:0007669"/>
    <property type="project" value="TreeGrafter"/>
</dbReference>
<dbReference type="GO" id="GO:0006457">
    <property type="term" value="P:protein folding"/>
    <property type="evidence" value="ECO:0007669"/>
    <property type="project" value="InterPro"/>
</dbReference>
<dbReference type="CDD" id="cd00446">
    <property type="entry name" value="GrpE"/>
    <property type="match status" value="1"/>
</dbReference>
<dbReference type="Gene3D" id="3.90.20.20">
    <property type="match status" value="1"/>
</dbReference>
<dbReference type="Gene3D" id="2.30.22.10">
    <property type="entry name" value="Head domain of nucleotide exchange factor GrpE"/>
    <property type="match status" value="1"/>
</dbReference>
<dbReference type="HAMAP" id="MF_01151">
    <property type="entry name" value="GrpE"/>
    <property type="match status" value="1"/>
</dbReference>
<dbReference type="InterPro" id="IPR000740">
    <property type="entry name" value="GrpE"/>
</dbReference>
<dbReference type="InterPro" id="IPR013805">
    <property type="entry name" value="GrpE_coiled_coil"/>
</dbReference>
<dbReference type="InterPro" id="IPR009012">
    <property type="entry name" value="GrpE_head"/>
</dbReference>
<dbReference type="PANTHER" id="PTHR21237">
    <property type="entry name" value="GRPE PROTEIN"/>
    <property type="match status" value="1"/>
</dbReference>
<dbReference type="PANTHER" id="PTHR21237:SF23">
    <property type="entry name" value="GRPE PROTEIN HOMOLOG, MITOCHONDRIAL"/>
    <property type="match status" value="1"/>
</dbReference>
<dbReference type="Pfam" id="PF01025">
    <property type="entry name" value="GrpE"/>
    <property type="match status" value="1"/>
</dbReference>
<dbReference type="PRINTS" id="PR00773">
    <property type="entry name" value="GRPEPROTEIN"/>
</dbReference>
<dbReference type="SUPFAM" id="SSF58014">
    <property type="entry name" value="Coiled-coil domain of nucleotide exchange factor GrpE"/>
    <property type="match status" value="1"/>
</dbReference>
<dbReference type="SUPFAM" id="SSF51064">
    <property type="entry name" value="Head domain of nucleotide exchange factor GrpE"/>
    <property type="match status" value="1"/>
</dbReference>
<dbReference type="PROSITE" id="PS01071">
    <property type="entry name" value="GRPE"/>
    <property type="match status" value="1"/>
</dbReference>
<comment type="function">
    <text evidence="1">Participates actively in the response to hyperosmotic and heat shock by preventing the aggregation of stress-denatured proteins, in association with DnaK and GrpE. It is the nucleotide exchange factor for DnaK and may function as a thermosensor. Unfolded proteins bind initially to DnaJ; upon interaction with the DnaJ-bound protein, DnaK hydrolyzes its bound ATP, resulting in the formation of a stable complex. GrpE releases ADP from DnaK; ATP binding to DnaK triggers the release of the substrate protein, thus completing the reaction cycle. Several rounds of ATP-dependent interactions between DnaJ, DnaK and GrpE are required for fully efficient folding.</text>
</comment>
<comment type="subunit">
    <text evidence="1">Homodimer.</text>
</comment>
<comment type="subcellular location">
    <subcellularLocation>
        <location evidence="1">Cytoplasm</location>
    </subcellularLocation>
</comment>
<comment type="similarity">
    <text evidence="1">Belongs to the GrpE family.</text>
</comment>
<organism>
    <name type="scientific">Onion yellows phytoplasma (strain OY-M)</name>
    <dbReference type="NCBI Taxonomy" id="262768"/>
    <lineage>
        <taxon>Bacteria</taxon>
        <taxon>Bacillati</taxon>
        <taxon>Mycoplasmatota</taxon>
        <taxon>Mollicutes</taxon>
        <taxon>Acholeplasmatales</taxon>
        <taxon>Acholeplasmataceae</taxon>
        <taxon>Candidatus Phytoplasma</taxon>
        <taxon>16SrI (Aster yellows group)</taxon>
    </lineage>
</organism>